<gene>
    <name evidence="1" type="primary">alaS</name>
    <name type="ordered locus">NMB1595</name>
</gene>
<keyword id="KW-0030">Aminoacyl-tRNA synthetase</keyword>
<keyword id="KW-0067">ATP-binding</keyword>
<keyword id="KW-0963">Cytoplasm</keyword>
<keyword id="KW-0436">Ligase</keyword>
<keyword id="KW-0479">Metal-binding</keyword>
<keyword id="KW-0547">Nucleotide-binding</keyword>
<keyword id="KW-0648">Protein biosynthesis</keyword>
<keyword id="KW-1185">Reference proteome</keyword>
<keyword id="KW-0694">RNA-binding</keyword>
<keyword id="KW-0820">tRNA-binding</keyword>
<keyword id="KW-0862">Zinc</keyword>
<comment type="function">
    <text evidence="1">Catalyzes the attachment of alanine to tRNA(Ala) in a two-step reaction: alanine is first activated by ATP to form Ala-AMP and then transferred to the acceptor end of tRNA(Ala). Also edits incorrectly charged Ser-tRNA(Ala) and Gly-tRNA(Ala) via its editing domain.</text>
</comment>
<comment type="catalytic activity">
    <reaction evidence="1">
        <text>tRNA(Ala) + L-alanine + ATP = L-alanyl-tRNA(Ala) + AMP + diphosphate</text>
        <dbReference type="Rhea" id="RHEA:12540"/>
        <dbReference type="Rhea" id="RHEA-COMP:9657"/>
        <dbReference type="Rhea" id="RHEA-COMP:9923"/>
        <dbReference type="ChEBI" id="CHEBI:30616"/>
        <dbReference type="ChEBI" id="CHEBI:33019"/>
        <dbReference type="ChEBI" id="CHEBI:57972"/>
        <dbReference type="ChEBI" id="CHEBI:78442"/>
        <dbReference type="ChEBI" id="CHEBI:78497"/>
        <dbReference type="ChEBI" id="CHEBI:456215"/>
        <dbReference type="EC" id="6.1.1.7"/>
    </reaction>
</comment>
<comment type="cofactor">
    <cofactor evidence="1">
        <name>Zn(2+)</name>
        <dbReference type="ChEBI" id="CHEBI:29105"/>
    </cofactor>
    <text evidence="1">Binds 1 zinc ion per subunit.</text>
</comment>
<comment type="subcellular location">
    <subcellularLocation>
        <location evidence="1">Cytoplasm</location>
    </subcellularLocation>
</comment>
<comment type="domain">
    <text evidence="1">Consists of three domains; the N-terminal catalytic domain, the editing domain and the C-terminal C-Ala domain. The editing domain removes incorrectly charged amino acids, while the C-Ala domain, along with tRNA(Ala), serves as a bridge to cooperatively bring together the editing and aminoacylation centers thus stimulating deacylation of misacylated tRNAs.</text>
</comment>
<comment type="similarity">
    <text evidence="1">Belongs to the class-II aminoacyl-tRNA synthetase family.</text>
</comment>
<accession>Q9JYG6</accession>
<dbReference type="EC" id="6.1.1.7" evidence="1"/>
<dbReference type="EMBL" id="AE002098">
    <property type="protein sequence ID" value="AAF41948.1"/>
    <property type="molecule type" value="Genomic_DNA"/>
</dbReference>
<dbReference type="PIR" id="F81063">
    <property type="entry name" value="F81063"/>
</dbReference>
<dbReference type="RefSeq" id="NP_274601.1">
    <property type="nucleotide sequence ID" value="NC_003112.2"/>
</dbReference>
<dbReference type="RefSeq" id="WP_010980961.1">
    <property type="nucleotide sequence ID" value="NC_003112.2"/>
</dbReference>
<dbReference type="SMR" id="Q9JYG6"/>
<dbReference type="FunCoup" id="Q9JYG6">
    <property type="interactions" value="527"/>
</dbReference>
<dbReference type="STRING" id="122586.NMB1595"/>
<dbReference type="PaxDb" id="122586-NMB1595"/>
<dbReference type="KEGG" id="nme:NMB1595"/>
<dbReference type="PATRIC" id="fig|122586.8.peg.2049"/>
<dbReference type="HOGENOM" id="CLU_004485_1_1_4"/>
<dbReference type="InParanoid" id="Q9JYG6"/>
<dbReference type="OrthoDB" id="9803884at2"/>
<dbReference type="Proteomes" id="UP000000425">
    <property type="component" value="Chromosome"/>
</dbReference>
<dbReference type="GO" id="GO:0005829">
    <property type="term" value="C:cytosol"/>
    <property type="evidence" value="ECO:0000318"/>
    <property type="project" value="GO_Central"/>
</dbReference>
<dbReference type="GO" id="GO:0004813">
    <property type="term" value="F:alanine-tRNA ligase activity"/>
    <property type="evidence" value="ECO:0000318"/>
    <property type="project" value="GO_Central"/>
</dbReference>
<dbReference type="GO" id="GO:0002161">
    <property type="term" value="F:aminoacyl-tRNA deacylase activity"/>
    <property type="evidence" value="ECO:0000318"/>
    <property type="project" value="GO_Central"/>
</dbReference>
<dbReference type="GO" id="GO:0005524">
    <property type="term" value="F:ATP binding"/>
    <property type="evidence" value="ECO:0007669"/>
    <property type="project" value="UniProtKB-UniRule"/>
</dbReference>
<dbReference type="GO" id="GO:0000049">
    <property type="term" value="F:tRNA binding"/>
    <property type="evidence" value="ECO:0007669"/>
    <property type="project" value="UniProtKB-KW"/>
</dbReference>
<dbReference type="GO" id="GO:0008270">
    <property type="term" value="F:zinc ion binding"/>
    <property type="evidence" value="ECO:0007669"/>
    <property type="project" value="UniProtKB-UniRule"/>
</dbReference>
<dbReference type="GO" id="GO:0006419">
    <property type="term" value="P:alanyl-tRNA aminoacylation"/>
    <property type="evidence" value="ECO:0000318"/>
    <property type="project" value="GO_Central"/>
</dbReference>
<dbReference type="GO" id="GO:0045892">
    <property type="term" value="P:negative regulation of DNA-templated transcription"/>
    <property type="evidence" value="ECO:0000318"/>
    <property type="project" value="GO_Central"/>
</dbReference>
<dbReference type="CDD" id="cd00673">
    <property type="entry name" value="AlaRS_core"/>
    <property type="match status" value="1"/>
</dbReference>
<dbReference type="FunFam" id="2.40.30.130:FF:000001">
    <property type="entry name" value="Alanine--tRNA ligase"/>
    <property type="match status" value="1"/>
</dbReference>
<dbReference type="FunFam" id="3.10.310.40:FF:000001">
    <property type="entry name" value="Alanine--tRNA ligase"/>
    <property type="match status" value="1"/>
</dbReference>
<dbReference type="FunFam" id="3.30.54.20:FF:000001">
    <property type="entry name" value="Alanine--tRNA ligase"/>
    <property type="match status" value="1"/>
</dbReference>
<dbReference type="FunFam" id="3.30.930.10:FF:000004">
    <property type="entry name" value="Alanine--tRNA ligase"/>
    <property type="match status" value="1"/>
</dbReference>
<dbReference type="FunFam" id="3.30.980.10:FF:000004">
    <property type="entry name" value="Alanine--tRNA ligase, cytoplasmic"/>
    <property type="match status" value="1"/>
</dbReference>
<dbReference type="Gene3D" id="2.40.30.130">
    <property type="match status" value="1"/>
</dbReference>
<dbReference type="Gene3D" id="3.10.310.40">
    <property type="match status" value="1"/>
</dbReference>
<dbReference type="Gene3D" id="3.30.54.20">
    <property type="match status" value="1"/>
</dbReference>
<dbReference type="Gene3D" id="3.30.930.10">
    <property type="entry name" value="Bira Bifunctional Protein, Domain 2"/>
    <property type="match status" value="1"/>
</dbReference>
<dbReference type="Gene3D" id="3.30.980.10">
    <property type="entry name" value="Threonyl-trna Synthetase, Chain A, domain 2"/>
    <property type="match status" value="1"/>
</dbReference>
<dbReference type="HAMAP" id="MF_00036_B">
    <property type="entry name" value="Ala_tRNA_synth_B"/>
    <property type="match status" value="1"/>
</dbReference>
<dbReference type="InterPro" id="IPR045864">
    <property type="entry name" value="aa-tRNA-synth_II/BPL/LPL"/>
</dbReference>
<dbReference type="InterPro" id="IPR002318">
    <property type="entry name" value="Ala-tRNA-lgiase_IIc"/>
</dbReference>
<dbReference type="InterPro" id="IPR018162">
    <property type="entry name" value="Ala-tRNA-ligase_IIc_anticod-bd"/>
</dbReference>
<dbReference type="InterPro" id="IPR018165">
    <property type="entry name" value="Ala-tRNA-synth_IIc_core"/>
</dbReference>
<dbReference type="InterPro" id="IPR018164">
    <property type="entry name" value="Ala-tRNA-synth_IIc_N"/>
</dbReference>
<dbReference type="InterPro" id="IPR050058">
    <property type="entry name" value="Ala-tRNA_ligase"/>
</dbReference>
<dbReference type="InterPro" id="IPR023033">
    <property type="entry name" value="Ala_tRNA_ligase_euk/bac"/>
</dbReference>
<dbReference type="InterPro" id="IPR003156">
    <property type="entry name" value="DHHA1_dom"/>
</dbReference>
<dbReference type="InterPro" id="IPR018163">
    <property type="entry name" value="Thr/Ala-tRNA-synth_IIc_edit"/>
</dbReference>
<dbReference type="InterPro" id="IPR009000">
    <property type="entry name" value="Transl_B-barrel_sf"/>
</dbReference>
<dbReference type="InterPro" id="IPR012947">
    <property type="entry name" value="tRNA_SAD"/>
</dbReference>
<dbReference type="NCBIfam" id="TIGR00344">
    <property type="entry name" value="alaS"/>
    <property type="match status" value="1"/>
</dbReference>
<dbReference type="PANTHER" id="PTHR11777:SF9">
    <property type="entry name" value="ALANINE--TRNA LIGASE, CYTOPLASMIC"/>
    <property type="match status" value="1"/>
</dbReference>
<dbReference type="PANTHER" id="PTHR11777">
    <property type="entry name" value="ALANYL-TRNA SYNTHETASE"/>
    <property type="match status" value="1"/>
</dbReference>
<dbReference type="Pfam" id="PF02272">
    <property type="entry name" value="DHHA1"/>
    <property type="match status" value="1"/>
</dbReference>
<dbReference type="Pfam" id="PF01411">
    <property type="entry name" value="tRNA-synt_2c"/>
    <property type="match status" value="1"/>
</dbReference>
<dbReference type="Pfam" id="PF07973">
    <property type="entry name" value="tRNA_SAD"/>
    <property type="match status" value="1"/>
</dbReference>
<dbReference type="PRINTS" id="PR00980">
    <property type="entry name" value="TRNASYNTHALA"/>
</dbReference>
<dbReference type="SMART" id="SM00863">
    <property type="entry name" value="tRNA_SAD"/>
    <property type="match status" value="1"/>
</dbReference>
<dbReference type="SUPFAM" id="SSF55681">
    <property type="entry name" value="Class II aaRS and biotin synthetases"/>
    <property type="match status" value="1"/>
</dbReference>
<dbReference type="SUPFAM" id="SSF101353">
    <property type="entry name" value="Putative anticodon-binding domain of alanyl-tRNA synthetase (AlaRS)"/>
    <property type="match status" value="1"/>
</dbReference>
<dbReference type="SUPFAM" id="SSF55186">
    <property type="entry name" value="ThrRS/AlaRS common domain"/>
    <property type="match status" value="1"/>
</dbReference>
<dbReference type="SUPFAM" id="SSF50447">
    <property type="entry name" value="Translation proteins"/>
    <property type="match status" value="1"/>
</dbReference>
<dbReference type="PROSITE" id="PS50860">
    <property type="entry name" value="AA_TRNA_LIGASE_II_ALA"/>
    <property type="match status" value="1"/>
</dbReference>
<feature type="chain" id="PRO_0000075161" description="Alanine--tRNA ligase">
    <location>
        <begin position="1"/>
        <end position="874"/>
    </location>
</feature>
<feature type="binding site" evidence="1">
    <location>
        <position position="562"/>
    </location>
    <ligand>
        <name>Zn(2+)</name>
        <dbReference type="ChEBI" id="CHEBI:29105"/>
    </ligand>
</feature>
<feature type="binding site" evidence="1">
    <location>
        <position position="566"/>
    </location>
    <ligand>
        <name>Zn(2+)</name>
        <dbReference type="ChEBI" id="CHEBI:29105"/>
    </ligand>
</feature>
<feature type="binding site" evidence="1">
    <location>
        <position position="664"/>
    </location>
    <ligand>
        <name>Zn(2+)</name>
        <dbReference type="ChEBI" id="CHEBI:29105"/>
    </ligand>
</feature>
<feature type="binding site" evidence="1">
    <location>
        <position position="668"/>
    </location>
    <ligand>
        <name>Zn(2+)</name>
        <dbReference type="ChEBI" id="CHEBI:29105"/>
    </ligand>
</feature>
<reference key="1">
    <citation type="journal article" date="2000" name="Science">
        <title>Complete genome sequence of Neisseria meningitidis serogroup B strain MC58.</title>
        <authorList>
            <person name="Tettelin H."/>
            <person name="Saunders N.J."/>
            <person name="Heidelberg J.F."/>
            <person name="Jeffries A.C."/>
            <person name="Nelson K.E."/>
            <person name="Eisen J.A."/>
            <person name="Ketchum K.A."/>
            <person name="Hood D.W."/>
            <person name="Peden J.F."/>
            <person name="Dodson R.J."/>
            <person name="Nelson W.C."/>
            <person name="Gwinn M.L."/>
            <person name="DeBoy R.T."/>
            <person name="Peterson J.D."/>
            <person name="Hickey E.K."/>
            <person name="Haft D.H."/>
            <person name="Salzberg S.L."/>
            <person name="White O."/>
            <person name="Fleischmann R.D."/>
            <person name="Dougherty B.A."/>
            <person name="Mason T.M."/>
            <person name="Ciecko A."/>
            <person name="Parksey D.S."/>
            <person name="Blair E."/>
            <person name="Cittone H."/>
            <person name="Clark E.B."/>
            <person name="Cotton M.D."/>
            <person name="Utterback T.R."/>
            <person name="Khouri H.M."/>
            <person name="Qin H."/>
            <person name="Vamathevan J.J."/>
            <person name="Gill J."/>
            <person name="Scarlato V."/>
            <person name="Masignani V."/>
            <person name="Pizza M."/>
            <person name="Grandi G."/>
            <person name="Sun L."/>
            <person name="Smith H.O."/>
            <person name="Fraser C.M."/>
            <person name="Moxon E.R."/>
            <person name="Rappuoli R."/>
            <person name="Venter J.C."/>
        </authorList>
    </citation>
    <scope>NUCLEOTIDE SEQUENCE [LARGE SCALE GENOMIC DNA]</scope>
    <source>
        <strain>ATCC BAA-335 / MC58</strain>
    </source>
</reference>
<name>SYA_NEIMB</name>
<sequence length="874" mass="96038">MKTSELRQKFLKFFETKGHTVVRSSSLVPHDDPTLLFTNAGMNQFKDVFLGFDKRPYSRATTAQKCVRAGGKHNDLENVGYTARHHTFFEMMGNFSFGDYFKRDAIHFAWEFLTSPEWLNIPKDKLLATVYAEDDEAYNIWLNEIGMPSERIVRIGDNKGAKYASDNFWQMGDTGPCGPCSEIFYDHGEEIWGGIPGSPEEDGDRWIEIWNCVFMQFNRDEQGNMNPLPKPSVDTGMGLERIAAVMQHVHSNYEIDLFQDLLKAVARETGAPFRMEEPSLKVIADHIRSCSFLIADGVLPSNEGRGYVLRRIIRRAVRHGYKLGQSKPFFHKLVADLVKEMGGAYPELKEKQAQIEEALKNEESRFAQTLETGMALLENALVKGGKTLGGEIIFKLYDTYGFPYDLTADICRERNIEPDEAGFEREMEAQRARARAAQSFKANAQLPYDGQDTEFKGYSERQTESKVLALYKDGEQVNELNEGDSGAVVIDFTPFYAESGGQVGDVGYIFSGENRFEVRDTQKIKAAVFGQFGVQTSGRLKVGDSVTAKVDDEIRNANMRNHSATHLMHKALRDVLGRHVEQKGSLVTAESTRFDISHPQAVTAEEIAEVERRVNEAILANVAVNAAIMSMEDAQKTGAMMLFGEKYGEEVRVLQMGGFSTELCGGTHVSRTGDIGLFKIISEGGIAAGVRRIEAITGLNALKWAQEQERLVKDIIAETKAQTEKDVLAKIQAGAAHAKALEKELARAKAELAVHAGAKLLDDAKDLGAAKLVAAQIEADAAALREIVTDLTGKSDNAVILLAAVNDGKVSLCAGVSKPLTGKVKAGDLVKFAAEQVGGKGGGRPDLAQAGGTDADKLPAVLDSVKDWVGAKLV</sequence>
<evidence type="ECO:0000255" key="1">
    <source>
        <dbReference type="HAMAP-Rule" id="MF_00036"/>
    </source>
</evidence>
<organism>
    <name type="scientific">Neisseria meningitidis serogroup B (strain ATCC BAA-335 / MC58)</name>
    <dbReference type="NCBI Taxonomy" id="122586"/>
    <lineage>
        <taxon>Bacteria</taxon>
        <taxon>Pseudomonadati</taxon>
        <taxon>Pseudomonadota</taxon>
        <taxon>Betaproteobacteria</taxon>
        <taxon>Neisseriales</taxon>
        <taxon>Neisseriaceae</taxon>
        <taxon>Neisseria</taxon>
    </lineage>
</organism>
<proteinExistence type="inferred from homology"/>
<protein>
    <recommendedName>
        <fullName evidence="1">Alanine--tRNA ligase</fullName>
        <ecNumber evidence="1">6.1.1.7</ecNumber>
    </recommendedName>
    <alternativeName>
        <fullName evidence="1">Alanyl-tRNA synthetase</fullName>
        <shortName evidence="1">AlaRS</shortName>
    </alternativeName>
</protein>